<reference key="1">
    <citation type="journal article" date="2008" name="Genome Res.">
        <title>Comparative genome analysis of Salmonella enteritidis PT4 and Salmonella gallinarum 287/91 provides insights into evolutionary and host adaptation pathways.</title>
        <authorList>
            <person name="Thomson N.R."/>
            <person name="Clayton D.J."/>
            <person name="Windhorst D."/>
            <person name="Vernikos G."/>
            <person name="Davidson S."/>
            <person name="Churcher C."/>
            <person name="Quail M.A."/>
            <person name="Stevens M."/>
            <person name="Jones M.A."/>
            <person name="Watson M."/>
            <person name="Barron A."/>
            <person name="Layton A."/>
            <person name="Pickard D."/>
            <person name="Kingsley R.A."/>
            <person name="Bignell A."/>
            <person name="Clark L."/>
            <person name="Harris B."/>
            <person name="Ormond D."/>
            <person name="Abdellah Z."/>
            <person name="Brooks K."/>
            <person name="Cherevach I."/>
            <person name="Chillingworth T."/>
            <person name="Woodward J."/>
            <person name="Norberczak H."/>
            <person name="Lord A."/>
            <person name="Arrowsmith C."/>
            <person name="Jagels K."/>
            <person name="Moule S."/>
            <person name="Mungall K."/>
            <person name="Saunders M."/>
            <person name="Whitehead S."/>
            <person name="Chabalgoity J.A."/>
            <person name="Maskell D."/>
            <person name="Humphreys T."/>
            <person name="Roberts M."/>
            <person name="Barrow P.A."/>
            <person name="Dougan G."/>
            <person name="Parkhill J."/>
        </authorList>
    </citation>
    <scope>NUCLEOTIDE SEQUENCE [LARGE SCALE GENOMIC DNA]</scope>
    <source>
        <strain>287/91 / NCTC 13346</strain>
    </source>
</reference>
<gene>
    <name evidence="1" type="primary">anmK</name>
    <name type="ordered locus">SG1672</name>
</gene>
<proteinExistence type="inferred from homology"/>
<accession>B5RAL3</accession>
<keyword id="KW-0067">ATP-binding</keyword>
<keyword id="KW-0119">Carbohydrate metabolism</keyword>
<keyword id="KW-0418">Kinase</keyword>
<keyword id="KW-0547">Nucleotide-binding</keyword>
<keyword id="KW-0808">Transferase</keyword>
<feature type="chain" id="PRO_1000140170" description="Anhydro-N-acetylmuramic acid kinase">
    <location>
        <begin position="1"/>
        <end position="373"/>
    </location>
</feature>
<feature type="binding site" evidence="1">
    <location>
        <begin position="12"/>
        <end position="19"/>
    </location>
    <ligand>
        <name>ATP</name>
        <dbReference type="ChEBI" id="CHEBI:30616"/>
    </ligand>
</feature>
<name>ANMK_SALG2</name>
<sequence length="373" mass="39814">MKSGRFIGVMSGTSLDGVDVVLAAIDETMVAQQASLTWPIPVHLKKGILDICQGQPLTLSQLGQLDTQLGRLFAQAVNALLARQRLQPRDIVAIGCHGQTVWHEPTGEAPHTLQIGDNNHIVAHTGITVVGDFRRRDIALGGQGAPLVPAFHHALLGHPTEKRMVLNIGGIANLSLLFPGQAVRGYDTGPGNMLMDAWIWRQCAQPYDKDAAWAKEGQVILPLLQKMLRDPYFAASAPKSTGREYFNYGWLERHLTAFSGADARDVQATLAELTAVSIAQQVLLNGGCERLMVCGGGSRNPLVMARLAALLPGIEVSTTDKAGISGDDMEALAFAWLAWRTLAGLPGNLPSVTGATEASVLGAIYPANPITQS</sequence>
<dbReference type="EC" id="2.7.1.170" evidence="1"/>
<dbReference type="EMBL" id="AM933173">
    <property type="protein sequence ID" value="CAR37531.1"/>
    <property type="molecule type" value="Genomic_DNA"/>
</dbReference>
<dbReference type="RefSeq" id="WP_000835029.1">
    <property type="nucleotide sequence ID" value="NC_011274.1"/>
</dbReference>
<dbReference type="SMR" id="B5RAL3"/>
<dbReference type="KEGG" id="seg:SG1672"/>
<dbReference type="HOGENOM" id="CLU_038782_0_0_6"/>
<dbReference type="UniPathway" id="UPA00343"/>
<dbReference type="UniPathway" id="UPA00544"/>
<dbReference type="Proteomes" id="UP000008321">
    <property type="component" value="Chromosome"/>
</dbReference>
<dbReference type="GO" id="GO:0005524">
    <property type="term" value="F:ATP binding"/>
    <property type="evidence" value="ECO:0007669"/>
    <property type="project" value="UniProtKB-UniRule"/>
</dbReference>
<dbReference type="GO" id="GO:0016301">
    <property type="term" value="F:kinase activity"/>
    <property type="evidence" value="ECO:0007669"/>
    <property type="project" value="UniProtKB-KW"/>
</dbReference>
<dbReference type="GO" id="GO:0016773">
    <property type="term" value="F:phosphotransferase activity, alcohol group as acceptor"/>
    <property type="evidence" value="ECO:0007669"/>
    <property type="project" value="UniProtKB-UniRule"/>
</dbReference>
<dbReference type="GO" id="GO:0097175">
    <property type="term" value="P:1,6-anhydro-N-acetyl-beta-muramic acid catabolic process"/>
    <property type="evidence" value="ECO:0007669"/>
    <property type="project" value="UniProtKB-UniRule"/>
</dbReference>
<dbReference type="GO" id="GO:0006040">
    <property type="term" value="P:amino sugar metabolic process"/>
    <property type="evidence" value="ECO:0007669"/>
    <property type="project" value="InterPro"/>
</dbReference>
<dbReference type="GO" id="GO:0009254">
    <property type="term" value="P:peptidoglycan turnover"/>
    <property type="evidence" value="ECO:0007669"/>
    <property type="project" value="UniProtKB-UniRule"/>
</dbReference>
<dbReference type="CDD" id="cd24050">
    <property type="entry name" value="ASKHA_NBD_ANMK"/>
    <property type="match status" value="1"/>
</dbReference>
<dbReference type="Gene3D" id="3.30.420.40">
    <property type="match status" value="2"/>
</dbReference>
<dbReference type="HAMAP" id="MF_01270">
    <property type="entry name" value="AnhMurNAc_kinase"/>
    <property type="match status" value="1"/>
</dbReference>
<dbReference type="InterPro" id="IPR005338">
    <property type="entry name" value="Anhydro_N_Ac-Mur_kinase"/>
</dbReference>
<dbReference type="InterPro" id="IPR043129">
    <property type="entry name" value="ATPase_NBD"/>
</dbReference>
<dbReference type="NCBIfam" id="NF007138">
    <property type="entry name" value="PRK09585.1-1"/>
    <property type="match status" value="1"/>
</dbReference>
<dbReference type="NCBIfam" id="NF007139">
    <property type="entry name" value="PRK09585.1-3"/>
    <property type="match status" value="1"/>
</dbReference>
<dbReference type="NCBIfam" id="NF007148">
    <property type="entry name" value="PRK09585.3-2"/>
    <property type="match status" value="1"/>
</dbReference>
<dbReference type="PANTHER" id="PTHR30605">
    <property type="entry name" value="ANHYDRO-N-ACETYLMURAMIC ACID KINASE"/>
    <property type="match status" value="1"/>
</dbReference>
<dbReference type="PANTHER" id="PTHR30605:SF0">
    <property type="entry name" value="ANHYDRO-N-ACETYLMURAMIC ACID KINASE"/>
    <property type="match status" value="1"/>
</dbReference>
<dbReference type="Pfam" id="PF03702">
    <property type="entry name" value="AnmK"/>
    <property type="match status" value="1"/>
</dbReference>
<dbReference type="SUPFAM" id="SSF53067">
    <property type="entry name" value="Actin-like ATPase domain"/>
    <property type="match status" value="1"/>
</dbReference>
<evidence type="ECO:0000255" key="1">
    <source>
        <dbReference type="HAMAP-Rule" id="MF_01270"/>
    </source>
</evidence>
<organism>
    <name type="scientific">Salmonella gallinarum (strain 287/91 / NCTC 13346)</name>
    <dbReference type="NCBI Taxonomy" id="550538"/>
    <lineage>
        <taxon>Bacteria</taxon>
        <taxon>Pseudomonadati</taxon>
        <taxon>Pseudomonadota</taxon>
        <taxon>Gammaproteobacteria</taxon>
        <taxon>Enterobacterales</taxon>
        <taxon>Enterobacteriaceae</taxon>
        <taxon>Salmonella</taxon>
    </lineage>
</organism>
<protein>
    <recommendedName>
        <fullName evidence="1">Anhydro-N-acetylmuramic acid kinase</fullName>
        <ecNumber evidence="1">2.7.1.170</ecNumber>
    </recommendedName>
    <alternativeName>
        <fullName evidence="1">AnhMurNAc kinase</fullName>
    </alternativeName>
</protein>
<comment type="function">
    <text evidence="1">Catalyzes the specific phosphorylation of 1,6-anhydro-N-acetylmuramic acid (anhMurNAc) with the simultaneous cleavage of the 1,6-anhydro ring, generating MurNAc-6-P. Is required for the utilization of anhMurNAc either imported from the medium or derived from its own cell wall murein, and thus plays a role in cell wall recycling.</text>
</comment>
<comment type="catalytic activity">
    <reaction evidence="1">
        <text>1,6-anhydro-N-acetyl-beta-muramate + ATP + H2O = N-acetyl-D-muramate 6-phosphate + ADP + H(+)</text>
        <dbReference type="Rhea" id="RHEA:24952"/>
        <dbReference type="ChEBI" id="CHEBI:15377"/>
        <dbReference type="ChEBI" id="CHEBI:15378"/>
        <dbReference type="ChEBI" id="CHEBI:30616"/>
        <dbReference type="ChEBI" id="CHEBI:58690"/>
        <dbReference type="ChEBI" id="CHEBI:58722"/>
        <dbReference type="ChEBI" id="CHEBI:456216"/>
        <dbReference type="EC" id="2.7.1.170"/>
    </reaction>
</comment>
<comment type="pathway">
    <text evidence="1">Amino-sugar metabolism; 1,6-anhydro-N-acetylmuramate degradation.</text>
</comment>
<comment type="pathway">
    <text evidence="1">Cell wall biogenesis; peptidoglycan recycling.</text>
</comment>
<comment type="similarity">
    <text evidence="1">Belongs to the anhydro-N-acetylmuramic acid kinase family.</text>
</comment>